<comment type="function">
    <text evidence="1">Catalyzes the interconversion of 2-phosphoglycerate and 3-phosphoglycerate.</text>
</comment>
<comment type="catalytic activity">
    <reaction evidence="1">
        <text>(2R)-2-phosphoglycerate = (2R)-3-phosphoglycerate</text>
        <dbReference type="Rhea" id="RHEA:15901"/>
        <dbReference type="ChEBI" id="CHEBI:58272"/>
        <dbReference type="ChEBI" id="CHEBI:58289"/>
        <dbReference type="EC" id="5.4.2.12"/>
    </reaction>
</comment>
<comment type="pathway">
    <text evidence="1">Carbohydrate degradation; glycolysis; pyruvate from D-glyceraldehyde 3-phosphate: step 3/5.</text>
</comment>
<comment type="similarity">
    <text evidence="1">Belongs to the BPG-independent phosphoglycerate mutase family. A-PGAM subfamily.</text>
</comment>
<protein>
    <recommendedName>
        <fullName evidence="1">2,3-bisphosphoglycerate-independent phosphoglycerate mutase</fullName>
        <shortName evidence="1">BPG-independent PGAM</shortName>
        <shortName evidence="1">Phosphoglyceromutase</shortName>
        <shortName evidence="1">aPGAM</shortName>
        <ecNumber evidence="1">5.4.2.12</ecNumber>
    </recommendedName>
</protein>
<keyword id="KW-0324">Glycolysis</keyword>
<keyword id="KW-0413">Isomerase</keyword>
<keyword id="KW-1185">Reference proteome</keyword>
<gene>
    <name evidence="1" type="primary">apgM</name>
    <name type="ordered locus">SSO0417</name>
</gene>
<organism>
    <name type="scientific">Saccharolobus solfataricus (strain ATCC 35092 / DSM 1617 / JCM 11322 / P2)</name>
    <name type="common">Sulfolobus solfataricus</name>
    <dbReference type="NCBI Taxonomy" id="273057"/>
    <lineage>
        <taxon>Archaea</taxon>
        <taxon>Thermoproteota</taxon>
        <taxon>Thermoprotei</taxon>
        <taxon>Sulfolobales</taxon>
        <taxon>Sulfolobaceae</taxon>
        <taxon>Saccharolobus</taxon>
    </lineage>
</organism>
<feature type="chain" id="PRO_0000138148" description="2,3-bisphosphoglycerate-independent phosphoglycerate mutase">
    <location>
        <begin position="1"/>
        <end position="414"/>
    </location>
</feature>
<name>APGM_SACS2</name>
<sequence length="414" mass="45180">MKQYKILLIVADGLGDRPVSKLNGLTPLEAANKPAITDLLKNSMIGLMDPISPGIIPGSDTSHLSIFGLDPHVYYRGRGAFEALGAGATLSHGDVAFRGNFATVNNDLVVVDRRAGRKLEEGEQLVKELNEKIKEINDVKIKFYKGTEHRIAVVLSGKGISDKVSDTDPHHEGLKVLESKPLEDSNEAIRTAEIINILTRKVFDVLNSSEINKRRIEQGEKPANIVLLRGAAHYVKLPPFSSYTKLKAAAVSATALIKGICRELGMNVITPSGATGGIDTNYNAKAKAAIELLKENDFVFLHIKATDAASHDGLVEEKVKAIERIDRVIGAIIDNIGRDNLILMFTGDHVTPVEIKEHTGDPVPVLLYVPYPIINDNVGDFNEKEARKGSLRIRGLDVTNILLNYSNRAEKYGS</sequence>
<accession>Q980A0</accession>
<evidence type="ECO:0000255" key="1">
    <source>
        <dbReference type="HAMAP-Rule" id="MF_01402"/>
    </source>
</evidence>
<reference key="1">
    <citation type="journal article" date="2001" name="Proc. Natl. Acad. Sci. U.S.A.">
        <title>The complete genome of the crenarchaeon Sulfolobus solfataricus P2.</title>
        <authorList>
            <person name="She Q."/>
            <person name="Singh R.K."/>
            <person name="Confalonieri F."/>
            <person name="Zivanovic Y."/>
            <person name="Allard G."/>
            <person name="Awayez M.J."/>
            <person name="Chan-Weiher C.C.-Y."/>
            <person name="Clausen I.G."/>
            <person name="Curtis B.A."/>
            <person name="De Moors A."/>
            <person name="Erauso G."/>
            <person name="Fletcher C."/>
            <person name="Gordon P.M.K."/>
            <person name="Heikamp-de Jong I."/>
            <person name="Jeffries A.C."/>
            <person name="Kozera C.J."/>
            <person name="Medina N."/>
            <person name="Peng X."/>
            <person name="Thi-Ngoc H.P."/>
            <person name="Redder P."/>
            <person name="Schenk M.E."/>
            <person name="Theriault C."/>
            <person name="Tolstrup N."/>
            <person name="Charlebois R.L."/>
            <person name="Doolittle W.F."/>
            <person name="Duguet M."/>
            <person name="Gaasterland T."/>
            <person name="Garrett R.A."/>
            <person name="Ragan M.A."/>
            <person name="Sensen C.W."/>
            <person name="Van der Oost J."/>
        </authorList>
    </citation>
    <scope>NUCLEOTIDE SEQUENCE [LARGE SCALE GENOMIC DNA]</scope>
    <source>
        <strain>ATCC 35092 / DSM 1617 / JCM 11322 / P2</strain>
    </source>
</reference>
<proteinExistence type="inferred from homology"/>
<dbReference type="EC" id="5.4.2.12" evidence="1"/>
<dbReference type="EMBL" id="AE006641">
    <property type="protein sequence ID" value="AAK40745.1"/>
    <property type="molecule type" value="Genomic_DNA"/>
</dbReference>
<dbReference type="PIR" id="B90186">
    <property type="entry name" value="B90186"/>
</dbReference>
<dbReference type="RefSeq" id="WP_009988763.1">
    <property type="nucleotide sequence ID" value="NC_002754.1"/>
</dbReference>
<dbReference type="SMR" id="Q980A0"/>
<dbReference type="FunCoup" id="Q980A0">
    <property type="interactions" value="227"/>
</dbReference>
<dbReference type="STRING" id="273057.SSO0417"/>
<dbReference type="PaxDb" id="273057-SSO0417"/>
<dbReference type="DNASU" id="1455555"/>
<dbReference type="EnsemblBacteria" id="AAK40745">
    <property type="protein sequence ID" value="AAK40745"/>
    <property type="gene ID" value="SSO0417"/>
</dbReference>
<dbReference type="KEGG" id="sso:SSO0417"/>
<dbReference type="PATRIC" id="fig|273057.12.peg.412"/>
<dbReference type="eggNOG" id="arCOG01696">
    <property type="taxonomic scope" value="Archaea"/>
</dbReference>
<dbReference type="HOGENOM" id="CLU_034906_2_0_2"/>
<dbReference type="InParanoid" id="Q980A0"/>
<dbReference type="PhylomeDB" id="Q980A0"/>
<dbReference type="BRENDA" id="5.4.2.12">
    <property type="organism ID" value="6163"/>
</dbReference>
<dbReference type="UniPathway" id="UPA00109">
    <property type="reaction ID" value="UER00186"/>
</dbReference>
<dbReference type="Proteomes" id="UP000001974">
    <property type="component" value="Chromosome"/>
</dbReference>
<dbReference type="GO" id="GO:0046872">
    <property type="term" value="F:metal ion binding"/>
    <property type="evidence" value="ECO:0007669"/>
    <property type="project" value="InterPro"/>
</dbReference>
<dbReference type="GO" id="GO:0004619">
    <property type="term" value="F:phosphoglycerate mutase activity"/>
    <property type="evidence" value="ECO:0007669"/>
    <property type="project" value="UniProtKB-EC"/>
</dbReference>
<dbReference type="GO" id="GO:0006096">
    <property type="term" value="P:glycolytic process"/>
    <property type="evidence" value="ECO:0007669"/>
    <property type="project" value="UniProtKB-UniRule"/>
</dbReference>
<dbReference type="CDD" id="cd16011">
    <property type="entry name" value="iPGM_like"/>
    <property type="match status" value="1"/>
</dbReference>
<dbReference type="Gene3D" id="3.40.720.10">
    <property type="entry name" value="Alkaline Phosphatase, subunit A"/>
    <property type="match status" value="2"/>
</dbReference>
<dbReference type="HAMAP" id="MF_01402_A">
    <property type="entry name" value="ApgM_A"/>
    <property type="match status" value="1"/>
</dbReference>
<dbReference type="InterPro" id="IPR017850">
    <property type="entry name" value="Alkaline_phosphatase_core_sf"/>
</dbReference>
<dbReference type="InterPro" id="IPR023665">
    <property type="entry name" value="ApgAM_prokaryotes"/>
</dbReference>
<dbReference type="InterPro" id="IPR006124">
    <property type="entry name" value="Metalloenzyme"/>
</dbReference>
<dbReference type="InterPro" id="IPR004456">
    <property type="entry name" value="Pglycerate_mutase_ApgM"/>
</dbReference>
<dbReference type="NCBIfam" id="TIGR00306">
    <property type="entry name" value="apgM"/>
    <property type="match status" value="1"/>
</dbReference>
<dbReference type="NCBIfam" id="NF003104">
    <property type="entry name" value="PRK04024.1"/>
    <property type="match status" value="1"/>
</dbReference>
<dbReference type="PANTHER" id="PTHR31209">
    <property type="entry name" value="COFACTOR-INDEPENDENT PHOSPHOGLYCERATE MUTASE"/>
    <property type="match status" value="1"/>
</dbReference>
<dbReference type="PANTHER" id="PTHR31209:SF0">
    <property type="entry name" value="METALLOENZYME DOMAIN-CONTAINING PROTEIN"/>
    <property type="match status" value="1"/>
</dbReference>
<dbReference type="Pfam" id="PF01676">
    <property type="entry name" value="Metalloenzyme"/>
    <property type="match status" value="1"/>
</dbReference>
<dbReference type="Pfam" id="PF10143">
    <property type="entry name" value="PhosphMutase"/>
    <property type="match status" value="1"/>
</dbReference>
<dbReference type="PIRSF" id="PIRSF006392">
    <property type="entry name" value="IPGAM_arch"/>
    <property type="match status" value="1"/>
</dbReference>
<dbReference type="SUPFAM" id="SSF53649">
    <property type="entry name" value="Alkaline phosphatase-like"/>
    <property type="match status" value="1"/>
</dbReference>